<protein>
    <recommendedName>
        <fullName>La protein homolog</fullName>
    </recommendedName>
    <alternativeName>
        <fullName>La autoantigen homolog</fullName>
    </alternativeName>
    <alternativeName>
        <fullName>La ribonucleoprotein</fullName>
    </alternativeName>
</protein>
<organism>
    <name type="scientific">Drosophila melanogaster</name>
    <name type="common">Fruit fly</name>
    <dbReference type="NCBI Taxonomy" id="7227"/>
    <lineage>
        <taxon>Eukaryota</taxon>
        <taxon>Metazoa</taxon>
        <taxon>Ecdysozoa</taxon>
        <taxon>Arthropoda</taxon>
        <taxon>Hexapoda</taxon>
        <taxon>Insecta</taxon>
        <taxon>Pterygota</taxon>
        <taxon>Neoptera</taxon>
        <taxon>Endopterygota</taxon>
        <taxon>Diptera</taxon>
        <taxon>Brachycera</taxon>
        <taxon>Muscomorpha</taxon>
        <taxon>Ephydroidea</taxon>
        <taxon>Drosophilidae</taxon>
        <taxon>Drosophila</taxon>
        <taxon>Sophophora</taxon>
    </lineage>
</organism>
<reference key="1">
    <citation type="journal article" date="1994" name="Mol. Cell. Biol.">
        <title>Developmental characterization of a Drosophila RNA-binding protein homologous to the human systemic lupus erythematosus-associated La/SS-B autoantigen.</title>
        <authorList>
            <person name="Bai C."/>
            <person name="Li Z."/>
            <person name="Tolias P.P."/>
        </authorList>
    </citation>
    <scope>NUCLEOTIDE SEQUENCE [MRNA]</scope>
    <source>
        <strain>Canton-S</strain>
        <tissue>Ovary</tissue>
    </source>
</reference>
<reference key="2">
    <citation type="journal article" date="1994" name="Mol. Cell. Biol.">
        <title>La proteins from Drosophila melanogaster and Saccharomyces cerevisiae: a yeast homolog of the La autoantigen is dispensable for growth.</title>
        <authorList>
            <person name="Yoo C.J."/>
            <person name="Wolin S.L."/>
        </authorList>
    </citation>
    <scope>NUCLEOTIDE SEQUENCE [MRNA]</scope>
</reference>
<reference key="3">
    <citation type="journal article" date="2000" name="Science">
        <title>The genome sequence of Drosophila melanogaster.</title>
        <authorList>
            <person name="Adams M.D."/>
            <person name="Celniker S.E."/>
            <person name="Holt R.A."/>
            <person name="Evans C.A."/>
            <person name="Gocayne J.D."/>
            <person name="Amanatides P.G."/>
            <person name="Scherer S.E."/>
            <person name="Li P.W."/>
            <person name="Hoskins R.A."/>
            <person name="Galle R.F."/>
            <person name="George R.A."/>
            <person name="Lewis S.E."/>
            <person name="Richards S."/>
            <person name="Ashburner M."/>
            <person name="Henderson S.N."/>
            <person name="Sutton G.G."/>
            <person name="Wortman J.R."/>
            <person name="Yandell M.D."/>
            <person name="Zhang Q."/>
            <person name="Chen L.X."/>
            <person name="Brandon R.C."/>
            <person name="Rogers Y.-H.C."/>
            <person name="Blazej R.G."/>
            <person name="Champe M."/>
            <person name="Pfeiffer B.D."/>
            <person name="Wan K.H."/>
            <person name="Doyle C."/>
            <person name="Baxter E.G."/>
            <person name="Helt G."/>
            <person name="Nelson C.R."/>
            <person name="Miklos G.L.G."/>
            <person name="Abril J.F."/>
            <person name="Agbayani A."/>
            <person name="An H.-J."/>
            <person name="Andrews-Pfannkoch C."/>
            <person name="Baldwin D."/>
            <person name="Ballew R.M."/>
            <person name="Basu A."/>
            <person name="Baxendale J."/>
            <person name="Bayraktaroglu L."/>
            <person name="Beasley E.M."/>
            <person name="Beeson K.Y."/>
            <person name="Benos P.V."/>
            <person name="Berman B.P."/>
            <person name="Bhandari D."/>
            <person name="Bolshakov S."/>
            <person name="Borkova D."/>
            <person name="Botchan M.R."/>
            <person name="Bouck J."/>
            <person name="Brokstein P."/>
            <person name="Brottier P."/>
            <person name="Burtis K.C."/>
            <person name="Busam D.A."/>
            <person name="Butler H."/>
            <person name="Cadieu E."/>
            <person name="Center A."/>
            <person name="Chandra I."/>
            <person name="Cherry J.M."/>
            <person name="Cawley S."/>
            <person name="Dahlke C."/>
            <person name="Davenport L.B."/>
            <person name="Davies P."/>
            <person name="de Pablos B."/>
            <person name="Delcher A."/>
            <person name="Deng Z."/>
            <person name="Mays A.D."/>
            <person name="Dew I."/>
            <person name="Dietz S.M."/>
            <person name="Dodson K."/>
            <person name="Doup L.E."/>
            <person name="Downes M."/>
            <person name="Dugan-Rocha S."/>
            <person name="Dunkov B.C."/>
            <person name="Dunn P."/>
            <person name="Durbin K.J."/>
            <person name="Evangelista C.C."/>
            <person name="Ferraz C."/>
            <person name="Ferriera S."/>
            <person name="Fleischmann W."/>
            <person name="Fosler C."/>
            <person name="Gabrielian A.E."/>
            <person name="Garg N.S."/>
            <person name="Gelbart W.M."/>
            <person name="Glasser K."/>
            <person name="Glodek A."/>
            <person name="Gong F."/>
            <person name="Gorrell J.H."/>
            <person name="Gu Z."/>
            <person name="Guan P."/>
            <person name="Harris M."/>
            <person name="Harris N.L."/>
            <person name="Harvey D.A."/>
            <person name="Heiman T.J."/>
            <person name="Hernandez J.R."/>
            <person name="Houck J."/>
            <person name="Hostin D."/>
            <person name="Houston K.A."/>
            <person name="Howland T.J."/>
            <person name="Wei M.-H."/>
            <person name="Ibegwam C."/>
            <person name="Jalali M."/>
            <person name="Kalush F."/>
            <person name="Karpen G.H."/>
            <person name="Ke Z."/>
            <person name="Kennison J.A."/>
            <person name="Ketchum K.A."/>
            <person name="Kimmel B.E."/>
            <person name="Kodira C.D."/>
            <person name="Kraft C.L."/>
            <person name="Kravitz S."/>
            <person name="Kulp D."/>
            <person name="Lai Z."/>
            <person name="Lasko P."/>
            <person name="Lei Y."/>
            <person name="Levitsky A.A."/>
            <person name="Li J.H."/>
            <person name="Li Z."/>
            <person name="Liang Y."/>
            <person name="Lin X."/>
            <person name="Liu X."/>
            <person name="Mattei B."/>
            <person name="McIntosh T.C."/>
            <person name="McLeod M.P."/>
            <person name="McPherson D."/>
            <person name="Merkulov G."/>
            <person name="Milshina N.V."/>
            <person name="Mobarry C."/>
            <person name="Morris J."/>
            <person name="Moshrefi A."/>
            <person name="Mount S.M."/>
            <person name="Moy M."/>
            <person name="Murphy B."/>
            <person name="Murphy L."/>
            <person name="Muzny D.M."/>
            <person name="Nelson D.L."/>
            <person name="Nelson D.R."/>
            <person name="Nelson K.A."/>
            <person name="Nixon K."/>
            <person name="Nusskern D.R."/>
            <person name="Pacleb J.M."/>
            <person name="Palazzolo M."/>
            <person name="Pittman G.S."/>
            <person name="Pan S."/>
            <person name="Pollard J."/>
            <person name="Puri V."/>
            <person name="Reese M.G."/>
            <person name="Reinert K."/>
            <person name="Remington K."/>
            <person name="Saunders R.D.C."/>
            <person name="Scheeler F."/>
            <person name="Shen H."/>
            <person name="Shue B.C."/>
            <person name="Siden-Kiamos I."/>
            <person name="Simpson M."/>
            <person name="Skupski M.P."/>
            <person name="Smith T.J."/>
            <person name="Spier E."/>
            <person name="Spradling A.C."/>
            <person name="Stapleton M."/>
            <person name="Strong R."/>
            <person name="Sun E."/>
            <person name="Svirskas R."/>
            <person name="Tector C."/>
            <person name="Turner R."/>
            <person name="Venter E."/>
            <person name="Wang A.H."/>
            <person name="Wang X."/>
            <person name="Wang Z.-Y."/>
            <person name="Wassarman D.A."/>
            <person name="Weinstock G.M."/>
            <person name="Weissenbach J."/>
            <person name="Williams S.M."/>
            <person name="Woodage T."/>
            <person name="Worley K.C."/>
            <person name="Wu D."/>
            <person name="Yang S."/>
            <person name="Yao Q.A."/>
            <person name="Ye J."/>
            <person name="Yeh R.-F."/>
            <person name="Zaveri J.S."/>
            <person name="Zhan M."/>
            <person name="Zhang G."/>
            <person name="Zhao Q."/>
            <person name="Zheng L."/>
            <person name="Zheng X.H."/>
            <person name="Zhong F.N."/>
            <person name="Zhong W."/>
            <person name="Zhou X."/>
            <person name="Zhu S.C."/>
            <person name="Zhu X."/>
            <person name="Smith H.O."/>
            <person name="Gibbs R.A."/>
            <person name="Myers E.W."/>
            <person name="Rubin G.M."/>
            <person name="Venter J.C."/>
        </authorList>
    </citation>
    <scope>NUCLEOTIDE SEQUENCE [LARGE SCALE GENOMIC DNA]</scope>
    <source>
        <strain>Berkeley</strain>
    </source>
</reference>
<reference key="4">
    <citation type="journal article" date="2002" name="Genome Biol.">
        <title>Annotation of the Drosophila melanogaster euchromatic genome: a systematic review.</title>
        <authorList>
            <person name="Misra S."/>
            <person name="Crosby M.A."/>
            <person name="Mungall C.J."/>
            <person name="Matthews B.B."/>
            <person name="Campbell K.S."/>
            <person name="Hradecky P."/>
            <person name="Huang Y."/>
            <person name="Kaminker J.S."/>
            <person name="Millburn G.H."/>
            <person name="Prochnik S.E."/>
            <person name="Smith C.D."/>
            <person name="Tupy J.L."/>
            <person name="Whitfield E.J."/>
            <person name="Bayraktaroglu L."/>
            <person name="Berman B.P."/>
            <person name="Bettencourt B.R."/>
            <person name="Celniker S.E."/>
            <person name="de Grey A.D.N.J."/>
            <person name="Drysdale R.A."/>
            <person name="Harris N.L."/>
            <person name="Richter J."/>
            <person name="Russo S."/>
            <person name="Schroeder A.J."/>
            <person name="Shu S.Q."/>
            <person name="Stapleton M."/>
            <person name="Yamada C."/>
            <person name="Ashburner M."/>
            <person name="Gelbart W.M."/>
            <person name="Rubin G.M."/>
            <person name="Lewis S.E."/>
        </authorList>
    </citation>
    <scope>GENOME REANNOTATION</scope>
    <source>
        <strain>Berkeley</strain>
    </source>
</reference>
<reference key="5">
    <citation type="journal article" date="2007" name="Mol. Biosyst.">
        <title>An integrated chemical, mass spectrometric and computational strategy for (quantitative) phosphoproteomics: application to Drosophila melanogaster Kc167 cells.</title>
        <authorList>
            <person name="Bodenmiller B."/>
            <person name="Mueller L.N."/>
            <person name="Pedrioli P.G.A."/>
            <person name="Pflieger D."/>
            <person name="Juenger M.A."/>
            <person name="Eng J.K."/>
            <person name="Aebersold R."/>
            <person name="Tao W.A."/>
        </authorList>
    </citation>
    <scope>PHOSPHORYLATION [LARGE SCALE ANALYSIS] AT THR-7 AND SER-9</scope>
    <scope>IDENTIFICATION BY MASS SPECTROMETRY</scope>
</reference>
<feature type="chain" id="PRO_0000207606" description="La protein homolog">
    <location>
        <begin position="1"/>
        <end position="390"/>
    </location>
</feature>
<feature type="domain" description="HTH La-type RNA-binding" evidence="2">
    <location>
        <begin position="44"/>
        <end position="137"/>
    </location>
</feature>
<feature type="domain" description="RRM" evidence="1">
    <location>
        <begin position="149"/>
        <end position="234"/>
    </location>
</feature>
<feature type="domain" description="xRRM" evidence="3">
    <location>
        <begin position="259"/>
        <end position="386"/>
    </location>
</feature>
<feature type="region of interest" description="Disordered" evidence="4">
    <location>
        <begin position="26"/>
        <end position="46"/>
    </location>
</feature>
<feature type="region of interest" description="Disordered" evidence="4">
    <location>
        <begin position="362"/>
        <end position="390"/>
    </location>
</feature>
<feature type="compositionally biased region" description="Basic residues" evidence="4">
    <location>
        <begin position="362"/>
        <end position="374"/>
    </location>
</feature>
<feature type="compositionally biased region" description="Basic and acidic residues" evidence="4">
    <location>
        <begin position="375"/>
        <end position="390"/>
    </location>
</feature>
<feature type="modified residue" description="Phosphothreonine" evidence="5">
    <location>
        <position position="7"/>
    </location>
</feature>
<feature type="modified residue" description="Phosphoserine" evidence="5">
    <location>
        <position position="9"/>
    </location>
</feature>
<feature type="sequence conflict" description="In Ref. 1; AAA20518." evidence="6" ref="1">
    <original>A</original>
    <variation>T</variation>
    <location>
        <position position="169"/>
    </location>
</feature>
<feature type="sequence conflict" description="In Ref. 1; AAA20518." evidence="6" ref="1">
    <original>KH</original>
    <variation>NS</variation>
    <location>
        <begin position="182"/>
        <end position="183"/>
    </location>
</feature>
<feature type="sequence conflict" description="In Ref. 1; AAA20518." evidence="6" ref="1">
    <original>A</original>
    <variation>R</variation>
    <location>
        <position position="283"/>
    </location>
</feature>
<feature type="sequence conflict" description="In Ref. 1; AAA20518." evidence="6" ref="1">
    <original>K</original>
    <variation>N</variation>
    <location>
        <position position="329"/>
    </location>
</feature>
<evidence type="ECO:0000255" key="1">
    <source>
        <dbReference type="PROSITE-ProRule" id="PRU00176"/>
    </source>
</evidence>
<evidence type="ECO:0000255" key="2">
    <source>
        <dbReference type="PROSITE-ProRule" id="PRU00332"/>
    </source>
</evidence>
<evidence type="ECO:0000255" key="3">
    <source>
        <dbReference type="PROSITE-ProRule" id="PRU01288"/>
    </source>
</evidence>
<evidence type="ECO:0000256" key="4">
    <source>
        <dbReference type="SAM" id="MobiDB-lite"/>
    </source>
</evidence>
<evidence type="ECO:0000269" key="5">
    <source>
    </source>
</evidence>
<evidence type="ECO:0000305" key="6"/>
<gene>
    <name type="primary">La</name>
    <name type="ORF">CG10922</name>
</gene>
<keyword id="KW-0238">DNA-binding</keyword>
<keyword id="KW-0539">Nucleus</keyword>
<keyword id="KW-0597">Phosphoprotein</keyword>
<keyword id="KW-1185">Reference proteome</keyword>
<keyword id="KW-0694">RNA-binding</keyword>
<dbReference type="EMBL" id="U07652">
    <property type="protein sequence ID" value="AAA20518.1"/>
    <property type="molecule type" value="mRNA"/>
</dbReference>
<dbReference type="EMBL" id="L32988">
    <property type="protein sequence ID" value="AAA21776.1"/>
    <property type="molecule type" value="mRNA"/>
</dbReference>
<dbReference type="EMBL" id="AE014134">
    <property type="protein sequence ID" value="AAF53885.1"/>
    <property type="molecule type" value="Genomic_DNA"/>
</dbReference>
<dbReference type="PIR" id="A53773">
    <property type="entry name" value="A53773"/>
</dbReference>
<dbReference type="PIR" id="A53781">
    <property type="entry name" value="A53781"/>
</dbReference>
<dbReference type="RefSeq" id="NP_477014.1">
    <property type="nucleotide sequence ID" value="NM_057666.5"/>
</dbReference>
<dbReference type="SMR" id="P40796"/>
<dbReference type="BioGRID" id="61271">
    <property type="interactions" value="11"/>
</dbReference>
<dbReference type="DIP" id="DIP-19001N"/>
<dbReference type="FunCoup" id="P40796">
    <property type="interactions" value="2780"/>
</dbReference>
<dbReference type="IntAct" id="P40796">
    <property type="interactions" value="36"/>
</dbReference>
<dbReference type="STRING" id="7227.FBpp0080906"/>
<dbReference type="iPTMnet" id="P40796"/>
<dbReference type="PaxDb" id="7227-FBpp0080905"/>
<dbReference type="DNASU" id="35305"/>
<dbReference type="EnsemblMetazoa" id="FBtr0081374">
    <property type="protein sequence ID" value="FBpp0080906"/>
    <property type="gene ID" value="FBgn0011638"/>
</dbReference>
<dbReference type="GeneID" id="35305"/>
<dbReference type="KEGG" id="dme:Dmel_CG10922"/>
<dbReference type="AGR" id="FB:FBgn0011638"/>
<dbReference type="CTD" id="35305"/>
<dbReference type="FlyBase" id="FBgn0011638">
    <property type="gene designation" value="La"/>
</dbReference>
<dbReference type="VEuPathDB" id="VectorBase:FBgn0011638"/>
<dbReference type="eggNOG" id="KOG4213">
    <property type="taxonomic scope" value="Eukaryota"/>
</dbReference>
<dbReference type="GeneTree" id="ENSGT00830000128380"/>
<dbReference type="HOGENOM" id="CLU_042341_1_1_1"/>
<dbReference type="InParanoid" id="P40796"/>
<dbReference type="OMA" id="PEHNEER"/>
<dbReference type="OrthoDB" id="439993at2759"/>
<dbReference type="PhylomeDB" id="P40796"/>
<dbReference type="SignaLink" id="P40796"/>
<dbReference type="BioGRID-ORCS" id="35305">
    <property type="hits" value="1 hit in 1 CRISPR screen"/>
</dbReference>
<dbReference type="GenomeRNAi" id="35305"/>
<dbReference type="PRO" id="PR:P40796"/>
<dbReference type="Proteomes" id="UP000000803">
    <property type="component" value="Chromosome 2L"/>
</dbReference>
<dbReference type="Bgee" id="FBgn0011638">
    <property type="expression patterns" value="Expressed in adult abdomen and 179 other cell types or tissues"/>
</dbReference>
<dbReference type="ExpressionAtlas" id="P40796">
    <property type="expression patterns" value="baseline and differential"/>
</dbReference>
<dbReference type="GO" id="GO:0010494">
    <property type="term" value="C:cytoplasmic stress granule"/>
    <property type="evidence" value="ECO:0000318"/>
    <property type="project" value="GO_Central"/>
</dbReference>
<dbReference type="GO" id="GO:0005829">
    <property type="term" value="C:cytosol"/>
    <property type="evidence" value="ECO:0000318"/>
    <property type="project" value="GO_Central"/>
</dbReference>
<dbReference type="GO" id="GO:0000791">
    <property type="term" value="C:euchromatin"/>
    <property type="evidence" value="ECO:0000314"/>
    <property type="project" value="FlyBase"/>
</dbReference>
<dbReference type="GO" id="GO:0005634">
    <property type="term" value="C:nucleus"/>
    <property type="evidence" value="ECO:0000314"/>
    <property type="project" value="FlyBase"/>
</dbReference>
<dbReference type="GO" id="GO:1990904">
    <property type="term" value="C:ribonucleoprotein complex"/>
    <property type="evidence" value="ECO:0007669"/>
    <property type="project" value="InterPro"/>
</dbReference>
<dbReference type="GO" id="GO:0008098">
    <property type="term" value="F:5S rRNA primary transcript binding"/>
    <property type="evidence" value="ECO:0000314"/>
    <property type="project" value="FlyBase"/>
</dbReference>
<dbReference type="GO" id="GO:0003677">
    <property type="term" value="F:DNA binding"/>
    <property type="evidence" value="ECO:0007669"/>
    <property type="project" value="UniProtKB-KW"/>
</dbReference>
<dbReference type="GO" id="GO:0003729">
    <property type="term" value="F:mRNA binding"/>
    <property type="evidence" value="ECO:0000250"/>
    <property type="project" value="FlyBase"/>
</dbReference>
<dbReference type="GO" id="GO:0045727">
    <property type="term" value="P:positive regulation of translation"/>
    <property type="evidence" value="ECO:0000318"/>
    <property type="project" value="GO_Central"/>
</dbReference>
<dbReference type="GO" id="GO:0008033">
    <property type="term" value="P:tRNA processing"/>
    <property type="evidence" value="ECO:0000318"/>
    <property type="project" value="GO_Central"/>
</dbReference>
<dbReference type="CDD" id="cd08028">
    <property type="entry name" value="LARP_3"/>
    <property type="match status" value="1"/>
</dbReference>
<dbReference type="CDD" id="cd12291">
    <property type="entry name" value="RRM1_La"/>
    <property type="match status" value="1"/>
</dbReference>
<dbReference type="CDD" id="cd12541">
    <property type="entry name" value="RRM2_La"/>
    <property type="match status" value="1"/>
</dbReference>
<dbReference type="FunFam" id="3.30.70.330:FF:001143">
    <property type="entry name" value="la protein homolog"/>
    <property type="match status" value="1"/>
</dbReference>
<dbReference type="Gene3D" id="3.30.70.330">
    <property type="match status" value="2"/>
</dbReference>
<dbReference type="Gene3D" id="1.10.10.10">
    <property type="entry name" value="Winged helix-like DNA-binding domain superfamily/Winged helix DNA-binding domain"/>
    <property type="match status" value="1"/>
</dbReference>
<dbReference type="InterPro" id="IPR045180">
    <property type="entry name" value="La_dom_prot"/>
</dbReference>
<dbReference type="InterPro" id="IPR006630">
    <property type="entry name" value="La_HTH"/>
</dbReference>
<dbReference type="InterPro" id="IPR014886">
    <property type="entry name" value="La_xRRM"/>
</dbReference>
<dbReference type="InterPro" id="IPR002344">
    <property type="entry name" value="Lupus_La"/>
</dbReference>
<dbReference type="InterPro" id="IPR012677">
    <property type="entry name" value="Nucleotide-bd_a/b_plait_sf"/>
</dbReference>
<dbReference type="InterPro" id="IPR035979">
    <property type="entry name" value="RBD_domain_sf"/>
</dbReference>
<dbReference type="InterPro" id="IPR000504">
    <property type="entry name" value="RRM_dom"/>
</dbReference>
<dbReference type="InterPro" id="IPR036388">
    <property type="entry name" value="WH-like_DNA-bd_sf"/>
</dbReference>
<dbReference type="InterPro" id="IPR036390">
    <property type="entry name" value="WH_DNA-bd_sf"/>
</dbReference>
<dbReference type="PANTHER" id="PTHR22792:SF166">
    <property type="entry name" value="LUPUS LA PROTEIN HOMOLOG"/>
    <property type="match status" value="1"/>
</dbReference>
<dbReference type="PANTHER" id="PTHR22792">
    <property type="entry name" value="LUPUS LA PROTEIN-RELATED"/>
    <property type="match status" value="1"/>
</dbReference>
<dbReference type="Pfam" id="PF05383">
    <property type="entry name" value="La"/>
    <property type="match status" value="1"/>
</dbReference>
<dbReference type="Pfam" id="PF08777">
    <property type="entry name" value="RRM_3"/>
    <property type="match status" value="1"/>
</dbReference>
<dbReference type="PRINTS" id="PR00302">
    <property type="entry name" value="LUPUSLA"/>
</dbReference>
<dbReference type="SMART" id="SM00715">
    <property type="entry name" value="LA"/>
    <property type="match status" value="1"/>
</dbReference>
<dbReference type="SMART" id="SM00360">
    <property type="entry name" value="RRM"/>
    <property type="match status" value="1"/>
</dbReference>
<dbReference type="SUPFAM" id="SSF54928">
    <property type="entry name" value="RNA-binding domain, RBD"/>
    <property type="match status" value="2"/>
</dbReference>
<dbReference type="SUPFAM" id="SSF46785">
    <property type="entry name" value="Winged helix' DNA-binding domain"/>
    <property type="match status" value="1"/>
</dbReference>
<dbReference type="PROSITE" id="PS50961">
    <property type="entry name" value="HTH_LA"/>
    <property type="match status" value="1"/>
</dbReference>
<dbReference type="PROSITE" id="PS50102">
    <property type="entry name" value="RRM"/>
    <property type="match status" value="1"/>
</dbReference>
<dbReference type="PROSITE" id="PS51939">
    <property type="entry name" value="XRRM"/>
    <property type="match status" value="1"/>
</dbReference>
<comment type="function">
    <text>May be involved in transcription termination by RNA polymerase III. Binds RNA and DNA. Binds to precursors of RNA polymerase III transcripts. May play a specialized role during fly development.</text>
</comment>
<comment type="subcellular location">
    <subcellularLocation>
        <location evidence="6">Nucleus</location>
    </subcellularLocation>
</comment>
<comment type="developmental stage">
    <text>Expressed throughout embryonic, larval, pupal, and adult development. Expression throughout the embryo is followed by a restricted pattern of mesodermal expression that is later confined to the visceral mesoderm, gonads, gut, and salivary glands.</text>
</comment>
<name>LA_DROME</name>
<proteinExistence type="evidence at protein level"/>
<sequence length="390" mass="44885">MAEVAETPSVEAQEEVAQPAEAQVLEAKNGDAKKDPAPAAEEAAGGFTKQERAIIRQVEYYFGDANLNRDKFLREQIGKNEDGWVPLSVLVTFKRLASLSTDLSEIVAALNKSEEGLVEISEDKLSLRRHPERPIPEHNEERRKEIQERTAYAKGFPLDSQISELLDFAANYDKVVNLTMRKHYDKPTKSYKFKGSIFLTFETKDQAKAFLEQEKIVYKERELLRKWQVDYLKEKQEEYAQKNEKRKNKKEAKPEPAFELPKNAIVVFEGAPETSSREEIREAFEKIKDFEVAYIEFAKGETKGSVRLTEADAAEKYIAKVEEGKLKFKDEVSLSLRKATEEEEKEFIDKAIEFMKKRRDFTRNKGKRFNRKRHGGNDHKHGGGKKARGD</sequence>
<accession>P40796</accession>
<accession>Q24375</accession>
<accession>Q9VIN2</accession>